<gene>
    <name evidence="1" type="primary">hemH</name>
    <name type="ordered locus">CCA_00137</name>
</gene>
<proteinExistence type="inferred from homology"/>
<keyword id="KW-0963">Cytoplasm</keyword>
<keyword id="KW-0350">Heme biosynthesis</keyword>
<keyword id="KW-0408">Iron</keyword>
<keyword id="KW-0456">Lyase</keyword>
<keyword id="KW-0479">Metal-binding</keyword>
<keyword id="KW-0627">Porphyrin biosynthesis</keyword>
<accession>Q824K8</accession>
<organism>
    <name type="scientific">Chlamydia caviae (strain ATCC VR-813 / DSM 19441 / 03DC25 / GPIC)</name>
    <name type="common">Chlamydophila caviae</name>
    <dbReference type="NCBI Taxonomy" id="227941"/>
    <lineage>
        <taxon>Bacteria</taxon>
        <taxon>Pseudomonadati</taxon>
        <taxon>Chlamydiota</taxon>
        <taxon>Chlamydiia</taxon>
        <taxon>Chlamydiales</taxon>
        <taxon>Chlamydiaceae</taxon>
        <taxon>Chlamydia/Chlamydophila group</taxon>
        <taxon>Chlamydia</taxon>
    </lineage>
</organism>
<comment type="function">
    <text evidence="1">Catalyzes the ferrous insertion into protoporphyrin IX.</text>
</comment>
<comment type="catalytic activity">
    <reaction evidence="1">
        <text>heme b + 2 H(+) = protoporphyrin IX + Fe(2+)</text>
        <dbReference type="Rhea" id="RHEA:22584"/>
        <dbReference type="ChEBI" id="CHEBI:15378"/>
        <dbReference type="ChEBI" id="CHEBI:29033"/>
        <dbReference type="ChEBI" id="CHEBI:57306"/>
        <dbReference type="ChEBI" id="CHEBI:60344"/>
        <dbReference type="EC" id="4.98.1.1"/>
    </reaction>
</comment>
<comment type="pathway">
    <text evidence="1">Porphyrin-containing compound metabolism; protoheme biosynthesis; protoheme from protoporphyrin-IX: step 1/1.</text>
</comment>
<comment type="subcellular location">
    <subcellularLocation>
        <location evidence="1">Cytoplasm</location>
    </subcellularLocation>
</comment>
<comment type="similarity">
    <text evidence="1">Belongs to the ferrochelatase family.</text>
</comment>
<feature type="chain" id="PRO_0000175127" description="Ferrochelatase">
    <location>
        <begin position="1"/>
        <end position="318"/>
    </location>
</feature>
<feature type="binding site" evidence="1">
    <location>
        <position position="186"/>
    </location>
    <ligand>
        <name>Fe cation</name>
        <dbReference type="ChEBI" id="CHEBI:24875"/>
    </ligand>
</feature>
<feature type="binding site" evidence="1">
    <location>
        <position position="264"/>
    </location>
    <ligand>
        <name>Fe cation</name>
        <dbReference type="ChEBI" id="CHEBI:24875"/>
    </ligand>
</feature>
<reference key="1">
    <citation type="journal article" date="2003" name="Nucleic Acids Res.">
        <title>Genome sequence of Chlamydophila caviae (Chlamydia psittaci GPIC): examining the role of niche-specific genes in the evolution of the Chlamydiaceae.</title>
        <authorList>
            <person name="Read T.D."/>
            <person name="Myers G.S.A."/>
            <person name="Brunham R.C."/>
            <person name="Nelson W.C."/>
            <person name="Paulsen I.T."/>
            <person name="Heidelberg J.F."/>
            <person name="Holtzapple E.K."/>
            <person name="Khouri H.M."/>
            <person name="Federova N.B."/>
            <person name="Carty H.A."/>
            <person name="Umayam L.A."/>
            <person name="Haft D.H."/>
            <person name="Peterson J.D."/>
            <person name="Beanan M.J."/>
            <person name="White O."/>
            <person name="Salzberg S.L."/>
            <person name="Hsia R.-C."/>
            <person name="McClarty G."/>
            <person name="Rank R.G."/>
            <person name="Bavoil P.M."/>
            <person name="Fraser C.M."/>
        </authorList>
    </citation>
    <scope>NUCLEOTIDE SEQUENCE [LARGE SCALE GENOMIC DNA]</scope>
    <source>
        <strain>ATCC VR-813 / DSM 19441 / 03DC25 / GPIC</strain>
    </source>
</reference>
<dbReference type="EC" id="4.98.1.1" evidence="1"/>
<dbReference type="EMBL" id="AE015925">
    <property type="protein sequence ID" value="AAP04889.1"/>
    <property type="molecule type" value="Genomic_DNA"/>
</dbReference>
<dbReference type="RefSeq" id="WP_011006110.1">
    <property type="nucleotide sequence ID" value="NC_003361.3"/>
</dbReference>
<dbReference type="SMR" id="Q824K8"/>
<dbReference type="STRING" id="227941.CCA_00137"/>
<dbReference type="KEGG" id="cca:CCA_00137"/>
<dbReference type="eggNOG" id="COG0276">
    <property type="taxonomic scope" value="Bacteria"/>
</dbReference>
<dbReference type="HOGENOM" id="CLU_018884_4_1_0"/>
<dbReference type="OrthoDB" id="9809741at2"/>
<dbReference type="UniPathway" id="UPA00252">
    <property type="reaction ID" value="UER00325"/>
</dbReference>
<dbReference type="Proteomes" id="UP000002193">
    <property type="component" value="Chromosome"/>
</dbReference>
<dbReference type="GO" id="GO:0005737">
    <property type="term" value="C:cytoplasm"/>
    <property type="evidence" value="ECO:0007669"/>
    <property type="project" value="UniProtKB-SubCell"/>
</dbReference>
<dbReference type="GO" id="GO:0004325">
    <property type="term" value="F:ferrochelatase activity"/>
    <property type="evidence" value="ECO:0007669"/>
    <property type="project" value="UniProtKB-UniRule"/>
</dbReference>
<dbReference type="GO" id="GO:0046872">
    <property type="term" value="F:metal ion binding"/>
    <property type="evidence" value="ECO:0007669"/>
    <property type="project" value="UniProtKB-KW"/>
</dbReference>
<dbReference type="GO" id="GO:0006783">
    <property type="term" value="P:heme biosynthetic process"/>
    <property type="evidence" value="ECO:0007669"/>
    <property type="project" value="UniProtKB-UniRule"/>
</dbReference>
<dbReference type="CDD" id="cd00419">
    <property type="entry name" value="Ferrochelatase_C"/>
    <property type="match status" value="1"/>
</dbReference>
<dbReference type="CDD" id="cd03411">
    <property type="entry name" value="Ferrochelatase_N"/>
    <property type="match status" value="1"/>
</dbReference>
<dbReference type="Gene3D" id="3.40.50.1400">
    <property type="match status" value="2"/>
</dbReference>
<dbReference type="HAMAP" id="MF_00323">
    <property type="entry name" value="Ferrochelatase"/>
    <property type="match status" value="1"/>
</dbReference>
<dbReference type="InterPro" id="IPR001015">
    <property type="entry name" value="Ferrochelatase"/>
</dbReference>
<dbReference type="InterPro" id="IPR019772">
    <property type="entry name" value="Ferrochelatase_AS"/>
</dbReference>
<dbReference type="InterPro" id="IPR033644">
    <property type="entry name" value="Ferrochelatase_C"/>
</dbReference>
<dbReference type="InterPro" id="IPR033659">
    <property type="entry name" value="Ferrochelatase_N"/>
</dbReference>
<dbReference type="NCBIfam" id="TIGR00109">
    <property type="entry name" value="hemH"/>
    <property type="match status" value="1"/>
</dbReference>
<dbReference type="PANTHER" id="PTHR11108">
    <property type="entry name" value="FERROCHELATASE"/>
    <property type="match status" value="1"/>
</dbReference>
<dbReference type="PANTHER" id="PTHR11108:SF1">
    <property type="entry name" value="FERROCHELATASE, MITOCHONDRIAL"/>
    <property type="match status" value="1"/>
</dbReference>
<dbReference type="Pfam" id="PF00762">
    <property type="entry name" value="Ferrochelatase"/>
    <property type="match status" value="1"/>
</dbReference>
<dbReference type="SUPFAM" id="SSF53800">
    <property type="entry name" value="Chelatase"/>
    <property type="match status" value="1"/>
</dbReference>
<dbReference type="PROSITE" id="PS00534">
    <property type="entry name" value="FERROCHELATASE"/>
    <property type="match status" value="1"/>
</dbReference>
<protein>
    <recommendedName>
        <fullName evidence="1">Ferrochelatase</fullName>
        <ecNumber evidence="1">4.98.1.1</ecNumber>
    </recommendedName>
    <alternativeName>
        <fullName evidence="1">Heme synthase</fullName>
    </alternativeName>
    <alternativeName>
        <fullName evidence="1">Protoheme ferro-lyase</fullName>
    </alternativeName>
</protein>
<evidence type="ECO:0000255" key="1">
    <source>
        <dbReference type="HAMAP-Rule" id="MF_00323"/>
    </source>
</evidence>
<sequence>MVSAYLLANFGGPRHSNDIEVFLTSLLTDRDVTGGFLPSFIHKRLFSFIAKKRALKVLPQYNCIGGFSPIYQDTELLAETLSSHLDAPVITFHRYLPDTHPHTIQQLKTLGDFPIVGVPLFPHFTYAVTGSIVRFIHNQLPLLNISWVSHFGNHPEFISCMMDHILKFLQSHDISTHDCCLLFSAHGLPMRHVNKGDPYNMQCEKSFRAISERLPNIETHLCYQSKFGPGKWLSPSTKDLCATLKTDKKHVLIVPFGFTSDHIETLYEIEKEYIAVLIDKGYQALRVPAIYQSSQWVESLATIIQSTPHVEKKSLIKS</sequence>
<name>HEMH_CHLCV</name>